<proteinExistence type="inferred from homology"/>
<dbReference type="EMBL" id="CP000419">
    <property type="protein sequence ID" value="ABJ65800.1"/>
    <property type="molecule type" value="Genomic_DNA"/>
</dbReference>
<dbReference type="RefSeq" id="WP_011226938.1">
    <property type="nucleotide sequence ID" value="NC_008532.1"/>
</dbReference>
<dbReference type="SMR" id="Q03LX2"/>
<dbReference type="KEGG" id="ste:STER_0522"/>
<dbReference type="HOGENOM" id="CLU_084338_1_0_9"/>
<dbReference type="GO" id="GO:0005886">
    <property type="term" value="C:plasma membrane"/>
    <property type="evidence" value="ECO:0007669"/>
    <property type="project" value="UniProtKB-SubCell"/>
</dbReference>
<dbReference type="GO" id="GO:0045259">
    <property type="term" value="C:proton-transporting ATP synthase complex"/>
    <property type="evidence" value="ECO:0007669"/>
    <property type="project" value="UniProtKB-KW"/>
</dbReference>
<dbReference type="GO" id="GO:0005524">
    <property type="term" value="F:ATP binding"/>
    <property type="evidence" value="ECO:0007669"/>
    <property type="project" value="UniProtKB-UniRule"/>
</dbReference>
<dbReference type="GO" id="GO:0046933">
    <property type="term" value="F:proton-transporting ATP synthase activity, rotational mechanism"/>
    <property type="evidence" value="ECO:0007669"/>
    <property type="project" value="UniProtKB-UniRule"/>
</dbReference>
<dbReference type="CDD" id="cd12152">
    <property type="entry name" value="F1-ATPase_delta"/>
    <property type="match status" value="1"/>
</dbReference>
<dbReference type="Gene3D" id="1.20.5.440">
    <property type="entry name" value="ATP synthase delta/epsilon subunit, C-terminal domain"/>
    <property type="match status" value="1"/>
</dbReference>
<dbReference type="Gene3D" id="2.60.15.10">
    <property type="entry name" value="F0F1 ATP synthase delta/epsilon subunit, N-terminal"/>
    <property type="match status" value="1"/>
</dbReference>
<dbReference type="HAMAP" id="MF_00530">
    <property type="entry name" value="ATP_synth_epsil_bac"/>
    <property type="match status" value="1"/>
</dbReference>
<dbReference type="InterPro" id="IPR001469">
    <property type="entry name" value="ATP_synth_F1_dsu/esu"/>
</dbReference>
<dbReference type="InterPro" id="IPR020546">
    <property type="entry name" value="ATP_synth_F1_dsu/esu_N"/>
</dbReference>
<dbReference type="InterPro" id="IPR020547">
    <property type="entry name" value="ATP_synth_F1_esu_C"/>
</dbReference>
<dbReference type="InterPro" id="IPR036771">
    <property type="entry name" value="ATPsynth_dsu/esu_N"/>
</dbReference>
<dbReference type="NCBIfam" id="TIGR01216">
    <property type="entry name" value="ATP_synt_epsi"/>
    <property type="match status" value="1"/>
</dbReference>
<dbReference type="NCBIfam" id="NF001846">
    <property type="entry name" value="PRK00571.1-3"/>
    <property type="match status" value="1"/>
</dbReference>
<dbReference type="PANTHER" id="PTHR13822">
    <property type="entry name" value="ATP SYNTHASE DELTA/EPSILON CHAIN"/>
    <property type="match status" value="1"/>
</dbReference>
<dbReference type="PANTHER" id="PTHR13822:SF10">
    <property type="entry name" value="ATP SYNTHASE EPSILON CHAIN, CHLOROPLASTIC"/>
    <property type="match status" value="1"/>
</dbReference>
<dbReference type="Pfam" id="PF00401">
    <property type="entry name" value="ATP-synt_DE"/>
    <property type="match status" value="1"/>
</dbReference>
<dbReference type="Pfam" id="PF02823">
    <property type="entry name" value="ATP-synt_DE_N"/>
    <property type="match status" value="1"/>
</dbReference>
<dbReference type="SUPFAM" id="SSF51344">
    <property type="entry name" value="Epsilon subunit of F1F0-ATP synthase N-terminal domain"/>
    <property type="match status" value="1"/>
</dbReference>
<evidence type="ECO:0000255" key="1">
    <source>
        <dbReference type="HAMAP-Rule" id="MF_00530"/>
    </source>
</evidence>
<name>ATPE_STRTD</name>
<sequence>MAQMTVQVVTPDGLKYDHHASFIHAVTKDGQIGILPGHINLIAPLEVDELKVRRVDDESHVDWIAVNGGIIEVKDDFITIIANSAERDRDIDVSRAERAKQRAERVLEEETKRVLEEATKSDRNDDVQRAQIALRRALNRINVGTKIR</sequence>
<comment type="function">
    <text evidence="1">Produces ATP from ADP in the presence of a proton gradient across the membrane.</text>
</comment>
<comment type="subunit">
    <text evidence="1">F-type ATPases have 2 components, CF(1) - the catalytic core - and CF(0) - the membrane proton channel. CF(1) has five subunits: alpha(3), beta(3), gamma(1), delta(1), epsilon(1). CF(0) has three main subunits: a, b and c.</text>
</comment>
<comment type="subcellular location">
    <subcellularLocation>
        <location evidence="1">Cell membrane</location>
        <topology evidence="1">Peripheral membrane protein</topology>
    </subcellularLocation>
</comment>
<comment type="similarity">
    <text evidence="1">Belongs to the ATPase epsilon chain family.</text>
</comment>
<feature type="chain" id="PRO_1000056544" description="ATP synthase epsilon chain">
    <location>
        <begin position="1"/>
        <end position="148"/>
    </location>
</feature>
<protein>
    <recommendedName>
        <fullName evidence="1">ATP synthase epsilon chain</fullName>
    </recommendedName>
    <alternativeName>
        <fullName evidence="1">ATP synthase F1 sector epsilon subunit</fullName>
    </alternativeName>
    <alternativeName>
        <fullName evidence="1">F-ATPase epsilon subunit</fullName>
    </alternativeName>
</protein>
<keyword id="KW-0066">ATP synthesis</keyword>
<keyword id="KW-1003">Cell membrane</keyword>
<keyword id="KW-0139">CF(1)</keyword>
<keyword id="KW-0375">Hydrogen ion transport</keyword>
<keyword id="KW-0406">Ion transport</keyword>
<keyword id="KW-0472">Membrane</keyword>
<keyword id="KW-0813">Transport</keyword>
<reference key="1">
    <citation type="journal article" date="2006" name="Proc. Natl. Acad. Sci. U.S.A.">
        <title>Comparative genomics of the lactic acid bacteria.</title>
        <authorList>
            <person name="Makarova K.S."/>
            <person name="Slesarev A."/>
            <person name="Wolf Y.I."/>
            <person name="Sorokin A."/>
            <person name="Mirkin B."/>
            <person name="Koonin E.V."/>
            <person name="Pavlov A."/>
            <person name="Pavlova N."/>
            <person name="Karamychev V."/>
            <person name="Polouchine N."/>
            <person name="Shakhova V."/>
            <person name="Grigoriev I."/>
            <person name="Lou Y."/>
            <person name="Rohksar D."/>
            <person name="Lucas S."/>
            <person name="Huang K."/>
            <person name="Goodstein D.M."/>
            <person name="Hawkins T."/>
            <person name="Plengvidhya V."/>
            <person name="Welker D."/>
            <person name="Hughes J."/>
            <person name="Goh Y."/>
            <person name="Benson A."/>
            <person name="Baldwin K."/>
            <person name="Lee J.-H."/>
            <person name="Diaz-Muniz I."/>
            <person name="Dosti B."/>
            <person name="Smeianov V."/>
            <person name="Wechter W."/>
            <person name="Barabote R."/>
            <person name="Lorca G."/>
            <person name="Altermann E."/>
            <person name="Barrangou R."/>
            <person name="Ganesan B."/>
            <person name="Xie Y."/>
            <person name="Rawsthorne H."/>
            <person name="Tamir D."/>
            <person name="Parker C."/>
            <person name="Breidt F."/>
            <person name="Broadbent J.R."/>
            <person name="Hutkins R."/>
            <person name="O'Sullivan D."/>
            <person name="Steele J."/>
            <person name="Unlu G."/>
            <person name="Saier M.H. Jr."/>
            <person name="Klaenhammer T."/>
            <person name="Richardson P."/>
            <person name="Kozyavkin S."/>
            <person name="Weimer B.C."/>
            <person name="Mills D.A."/>
        </authorList>
    </citation>
    <scope>NUCLEOTIDE SEQUENCE [LARGE SCALE GENOMIC DNA]</scope>
    <source>
        <strain>ATCC BAA-491 / LMD-9</strain>
    </source>
</reference>
<gene>
    <name evidence="1" type="primary">atpC</name>
    <name type="ordered locus">STER_0522</name>
</gene>
<organism>
    <name type="scientific">Streptococcus thermophilus (strain ATCC BAA-491 / LMD-9)</name>
    <dbReference type="NCBI Taxonomy" id="322159"/>
    <lineage>
        <taxon>Bacteria</taxon>
        <taxon>Bacillati</taxon>
        <taxon>Bacillota</taxon>
        <taxon>Bacilli</taxon>
        <taxon>Lactobacillales</taxon>
        <taxon>Streptococcaceae</taxon>
        <taxon>Streptococcus</taxon>
    </lineage>
</organism>
<accession>Q03LX2</accession>